<accession>B0K1T7</accession>
<proteinExistence type="inferred from homology"/>
<name>HSLV_THEPX</name>
<dbReference type="EC" id="3.4.25.2" evidence="1"/>
<dbReference type="EMBL" id="CP000923">
    <property type="protein sequence ID" value="ABY92985.1"/>
    <property type="molecule type" value="Genomic_DNA"/>
</dbReference>
<dbReference type="RefSeq" id="WP_003866693.1">
    <property type="nucleotide sequence ID" value="NC_010320.1"/>
</dbReference>
<dbReference type="SMR" id="B0K1T7"/>
<dbReference type="MEROPS" id="T01.007"/>
<dbReference type="KEGG" id="tex:Teth514_1699"/>
<dbReference type="HOGENOM" id="CLU_093872_1_1_9"/>
<dbReference type="Proteomes" id="UP000002155">
    <property type="component" value="Chromosome"/>
</dbReference>
<dbReference type="GO" id="GO:0009376">
    <property type="term" value="C:HslUV protease complex"/>
    <property type="evidence" value="ECO:0007669"/>
    <property type="project" value="UniProtKB-UniRule"/>
</dbReference>
<dbReference type="GO" id="GO:0005839">
    <property type="term" value="C:proteasome core complex"/>
    <property type="evidence" value="ECO:0007669"/>
    <property type="project" value="InterPro"/>
</dbReference>
<dbReference type="GO" id="GO:0046872">
    <property type="term" value="F:metal ion binding"/>
    <property type="evidence" value="ECO:0007669"/>
    <property type="project" value="UniProtKB-KW"/>
</dbReference>
<dbReference type="GO" id="GO:0004298">
    <property type="term" value="F:threonine-type endopeptidase activity"/>
    <property type="evidence" value="ECO:0007669"/>
    <property type="project" value="UniProtKB-KW"/>
</dbReference>
<dbReference type="GO" id="GO:0051603">
    <property type="term" value="P:proteolysis involved in protein catabolic process"/>
    <property type="evidence" value="ECO:0007669"/>
    <property type="project" value="InterPro"/>
</dbReference>
<dbReference type="CDD" id="cd01913">
    <property type="entry name" value="protease_HslV"/>
    <property type="match status" value="1"/>
</dbReference>
<dbReference type="Gene3D" id="3.60.20.10">
    <property type="entry name" value="Glutamine Phosphoribosylpyrophosphate, subunit 1, domain 1"/>
    <property type="match status" value="1"/>
</dbReference>
<dbReference type="HAMAP" id="MF_00248">
    <property type="entry name" value="HslV"/>
    <property type="match status" value="1"/>
</dbReference>
<dbReference type="InterPro" id="IPR022281">
    <property type="entry name" value="ATP-dep_Prtase_HsIV_su"/>
</dbReference>
<dbReference type="InterPro" id="IPR029055">
    <property type="entry name" value="Ntn_hydrolases_N"/>
</dbReference>
<dbReference type="InterPro" id="IPR001353">
    <property type="entry name" value="Proteasome_sua/b"/>
</dbReference>
<dbReference type="InterPro" id="IPR023333">
    <property type="entry name" value="Proteasome_suB-type"/>
</dbReference>
<dbReference type="NCBIfam" id="TIGR03692">
    <property type="entry name" value="ATP_dep_HslV"/>
    <property type="match status" value="1"/>
</dbReference>
<dbReference type="NCBIfam" id="NF003964">
    <property type="entry name" value="PRK05456.1"/>
    <property type="match status" value="1"/>
</dbReference>
<dbReference type="PANTHER" id="PTHR32194:SF0">
    <property type="entry name" value="ATP-DEPENDENT PROTEASE SUBUNIT HSLV"/>
    <property type="match status" value="1"/>
</dbReference>
<dbReference type="PANTHER" id="PTHR32194">
    <property type="entry name" value="METALLOPROTEASE TLDD"/>
    <property type="match status" value="1"/>
</dbReference>
<dbReference type="Pfam" id="PF00227">
    <property type="entry name" value="Proteasome"/>
    <property type="match status" value="1"/>
</dbReference>
<dbReference type="PIRSF" id="PIRSF039093">
    <property type="entry name" value="HslV"/>
    <property type="match status" value="1"/>
</dbReference>
<dbReference type="SUPFAM" id="SSF56235">
    <property type="entry name" value="N-terminal nucleophile aminohydrolases (Ntn hydrolases)"/>
    <property type="match status" value="1"/>
</dbReference>
<dbReference type="PROSITE" id="PS51476">
    <property type="entry name" value="PROTEASOME_BETA_2"/>
    <property type="match status" value="1"/>
</dbReference>
<feature type="chain" id="PRO_1000100922" description="ATP-dependent protease subunit HslV">
    <location>
        <begin position="1"/>
        <end position="176"/>
    </location>
</feature>
<feature type="active site" evidence="1">
    <location>
        <position position="5"/>
    </location>
</feature>
<feature type="binding site" evidence="1">
    <location>
        <position position="161"/>
    </location>
    <ligand>
        <name>Na(+)</name>
        <dbReference type="ChEBI" id="CHEBI:29101"/>
    </ligand>
</feature>
<feature type="binding site" evidence="1">
    <location>
        <position position="164"/>
    </location>
    <ligand>
        <name>Na(+)</name>
        <dbReference type="ChEBI" id="CHEBI:29101"/>
    </ligand>
</feature>
<feature type="binding site" evidence="1">
    <location>
        <position position="167"/>
    </location>
    <ligand>
        <name>Na(+)</name>
        <dbReference type="ChEBI" id="CHEBI:29101"/>
    </ligand>
</feature>
<organism>
    <name type="scientific">Thermoanaerobacter sp. (strain X514)</name>
    <dbReference type="NCBI Taxonomy" id="399726"/>
    <lineage>
        <taxon>Bacteria</taxon>
        <taxon>Bacillati</taxon>
        <taxon>Bacillota</taxon>
        <taxon>Clostridia</taxon>
        <taxon>Thermoanaerobacterales</taxon>
        <taxon>Thermoanaerobacteraceae</taxon>
        <taxon>Thermoanaerobacter</taxon>
    </lineage>
</organism>
<protein>
    <recommendedName>
        <fullName evidence="1">ATP-dependent protease subunit HslV</fullName>
        <ecNumber evidence="1">3.4.25.2</ecNumber>
    </recommendedName>
</protein>
<comment type="function">
    <text evidence="1">Protease subunit of a proteasome-like degradation complex believed to be a general protein degrading machinery.</text>
</comment>
<comment type="catalytic activity">
    <reaction evidence="1">
        <text>ATP-dependent cleavage of peptide bonds with broad specificity.</text>
        <dbReference type="EC" id="3.4.25.2"/>
    </reaction>
</comment>
<comment type="activity regulation">
    <text evidence="1">Allosterically activated by HslU binding.</text>
</comment>
<comment type="subunit">
    <text evidence="1">A double ring-shaped homohexamer of HslV is capped on each side by a ring-shaped HslU homohexamer. The assembly of the HslU/HslV complex is dependent on binding of ATP.</text>
</comment>
<comment type="subcellular location">
    <subcellularLocation>
        <location evidence="1">Cytoplasm</location>
    </subcellularLocation>
</comment>
<comment type="similarity">
    <text evidence="1">Belongs to the peptidase T1B family. HslV subfamily.</text>
</comment>
<sequence length="176" mass="19029">MFKGTTIIAVRKGAKVSVAGDGQITFGENTILKHGAKKIRRLYNGEVIVGFAGSVADALTLSQKFEEKLEQYGGNLKRAAVELAQEWRKDKILRKLEALLIAVDKKDTLLISGTGEVIEPDEDVIGIGSGGNYAMAAALALRYNTDLDTEDIAKKALEIASKICVYTNNNITVETL</sequence>
<evidence type="ECO:0000255" key="1">
    <source>
        <dbReference type="HAMAP-Rule" id="MF_00248"/>
    </source>
</evidence>
<keyword id="KW-0021">Allosteric enzyme</keyword>
<keyword id="KW-0963">Cytoplasm</keyword>
<keyword id="KW-0378">Hydrolase</keyword>
<keyword id="KW-0479">Metal-binding</keyword>
<keyword id="KW-0645">Protease</keyword>
<keyword id="KW-0915">Sodium</keyword>
<keyword id="KW-0888">Threonine protease</keyword>
<reference key="1">
    <citation type="submission" date="2008-01" db="EMBL/GenBank/DDBJ databases">
        <title>Complete sequence of Thermoanaerobacter sp. X514.</title>
        <authorList>
            <consortium name="US DOE Joint Genome Institute"/>
            <person name="Copeland A."/>
            <person name="Lucas S."/>
            <person name="Lapidus A."/>
            <person name="Barry K."/>
            <person name="Glavina del Rio T."/>
            <person name="Dalin E."/>
            <person name="Tice H."/>
            <person name="Pitluck S."/>
            <person name="Bruce D."/>
            <person name="Goodwin L."/>
            <person name="Saunders E."/>
            <person name="Brettin T."/>
            <person name="Detter J.C."/>
            <person name="Han C."/>
            <person name="Schmutz J."/>
            <person name="Larimer F."/>
            <person name="Land M."/>
            <person name="Hauser L."/>
            <person name="Kyrpides N."/>
            <person name="Kim E."/>
            <person name="Hemme C."/>
            <person name="Fields M.W."/>
            <person name="He Z."/>
            <person name="Zhou J."/>
            <person name="Richardson P."/>
        </authorList>
    </citation>
    <scope>NUCLEOTIDE SEQUENCE [LARGE SCALE GENOMIC DNA]</scope>
    <source>
        <strain>X514</strain>
    </source>
</reference>
<gene>
    <name evidence="1" type="primary">hslV</name>
    <name type="ordered locus">Teth514_1699</name>
</gene>